<accession>Q6AD09</accession>
<proteinExistence type="inferred from homology"/>
<keyword id="KW-1185">Reference proteome</keyword>
<keyword id="KW-0687">Ribonucleoprotein</keyword>
<keyword id="KW-0689">Ribosomal protein</keyword>
<keyword id="KW-0694">RNA-binding</keyword>
<keyword id="KW-0699">rRNA-binding</keyword>
<name>RL6_LEIXX</name>
<organism>
    <name type="scientific">Leifsonia xyli subsp. xyli (strain CTCB07)</name>
    <dbReference type="NCBI Taxonomy" id="281090"/>
    <lineage>
        <taxon>Bacteria</taxon>
        <taxon>Bacillati</taxon>
        <taxon>Actinomycetota</taxon>
        <taxon>Actinomycetes</taxon>
        <taxon>Micrococcales</taxon>
        <taxon>Microbacteriaceae</taxon>
        <taxon>Leifsonia</taxon>
    </lineage>
</organism>
<feature type="chain" id="PRO_0000260886" description="Large ribosomal subunit protein uL6">
    <location>
        <begin position="1"/>
        <end position="178"/>
    </location>
</feature>
<comment type="function">
    <text evidence="1">This protein binds to the 23S rRNA, and is important in its secondary structure. It is located near the subunit interface in the base of the L7/L12 stalk, and near the tRNA binding site of the peptidyltransferase center.</text>
</comment>
<comment type="subunit">
    <text evidence="1">Part of the 50S ribosomal subunit.</text>
</comment>
<comment type="similarity">
    <text evidence="1">Belongs to the universal ribosomal protein uL6 family.</text>
</comment>
<gene>
    <name evidence="1" type="primary">rplF</name>
    <name type="ordered locus">Lxx20190</name>
</gene>
<evidence type="ECO:0000255" key="1">
    <source>
        <dbReference type="HAMAP-Rule" id="MF_01365"/>
    </source>
</evidence>
<evidence type="ECO:0000305" key="2"/>
<dbReference type="EMBL" id="AE016822">
    <property type="protein sequence ID" value="AAT89735.1"/>
    <property type="molecule type" value="Genomic_DNA"/>
</dbReference>
<dbReference type="RefSeq" id="WP_011186721.1">
    <property type="nucleotide sequence ID" value="NC_006087.1"/>
</dbReference>
<dbReference type="SMR" id="Q6AD09"/>
<dbReference type="STRING" id="281090.Lxx20190"/>
<dbReference type="KEGG" id="lxx:Lxx20190"/>
<dbReference type="eggNOG" id="COG0097">
    <property type="taxonomic scope" value="Bacteria"/>
</dbReference>
<dbReference type="HOGENOM" id="CLU_065464_1_2_11"/>
<dbReference type="Proteomes" id="UP000001306">
    <property type="component" value="Chromosome"/>
</dbReference>
<dbReference type="GO" id="GO:0022625">
    <property type="term" value="C:cytosolic large ribosomal subunit"/>
    <property type="evidence" value="ECO:0007669"/>
    <property type="project" value="TreeGrafter"/>
</dbReference>
<dbReference type="GO" id="GO:0019843">
    <property type="term" value="F:rRNA binding"/>
    <property type="evidence" value="ECO:0007669"/>
    <property type="project" value="UniProtKB-UniRule"/>
</dbReference>
<dbReference type="GO" id="GO:0003735">
    <property type="term" value="F:structural constituent of ribosome"/>
    <property type="evidence" value="ECO:0007669"/>
    <property type="project" value="InterPro"/>
</dbReference>
<dbReference type="GO" id="GO:0002181">
    <property type="term" value="P:cytoplasmic translation"/>
    <property type="evidence" value="ECO:0007669"/>
    <property type="project" value="TreeGrafter"/>
</dbReference>
<dbReference type="FunFam" id="3.90.930.12:FF:000001">
    <property type="entry name" value="50S ribosomal protein L6"/>
    <property type="match status" value="1"/>
</dbReference>
<dbReference type="FunFam" id="3.90.930.12:FF:000002">
    <property type="entry name" value="50S ribosomal protein L6"/>
    <property type="match status" value="1"/>
</dbReference>
<dbReference type="Gene3D" id="3.90.930.12">
    <property type="entry name" value="Ribosomal protein L6, alpha-beta domain"/>
    <property type="match status" value="2"/>
</dbReference>
<dbReference type="HAMAP" id="MF_01365_B">
    <property type="entry name" value="Ribosomal_uL6_B"/>
    <property type="match status" value="1"/>
</dbReference>
<dbReference type="InterPro" id="IPR000702">
    <property type="entry name" value="Ribosomal_uL6-like"/>
</dbReference>
<dbReference type="InterPro" id="IPR036789">
    <property type="entry name" value="Ribosomal_uL6-like_a/b-dom_sf"/>
</dbReference>
<dbReference type="InterPro" id="IPR020040">
    <property type="entry name" value="Ribosomal_uL6_a/b-dom"/>
</dbReference>
<dbReference type="InterPro" id="IPR019906">
    <property type="entry name" value="Ribosomal_uL6_bac-type"/>
</dbReference>
<dbReference type="InterPro" id="IPR002358">
    <property type="entry name" value="Ribosomal_uL6_CS"/>
</dbReference>
<dbReference type="NCBIfam" id="TIGR03654">
    <property type="entry name" value="L6_bact"/>
    <property type="match status" value="1"/>
</dbReference>
<dbReference type="PANTHER" id="PTHR11655">
    <property type="entry name" value="60S/50S RIBOSOMAL PROTEIN L6/L9"/>
    <property type="match status" value="1"/>
</dbReference>
<dbReference type="PANTHER" id="PTHR11655:SF14">
    <property type="entry name" value="LARGE RIBOSOMAL SUBUNIT PROTEIN UL6M"/>
    <property type="match status" value="1"/>
</dbReference>
<dbReference type="Pfam" id="PF00347">
    <property type="entry name" value="Ribosomal_L6"/>
    <property type="match status" value="2"/>
</dbReference>
<dbReference type="PIRSF" id="PIRSF002162">
    <property type="entry name" value="Ribosomal_L6"/>
    <property type="match status" value="1"/>
</dbReference>
<dbReference type="PRINTS" id="PR00059">
    <property type="entry name" value="RIBOSOMALL6"/>
</dbReference>
<dbReference type="SUPFAM" id="SSF56053">
    <property type="entry name" value="Ribosomal protein L6"/>
    <property type="match status" value="2"/>
</dbReference>
<dbReference type="PROSITE" id="PS00525">
    <property type="entry name" value="RIBOSOMAL_L6_1"/>
    <property type="match status" value="1"/>
</dbReference>
<protein>
    <recommendedName>
        <fullName evidence="1">Large ribosomal subunit protein uL6</fullName>
    </recommendedName>
    <alternativeName>
        <fullName evidence="2">50S ribosomal protein L6</fullName>
    </alternativeName>
</protein>
<reference key="1">
    <citation type="journal article" date="2004" name="Mol. Plant Microbe Interact.">
        <title>The genome sequence of the Gram-positive sugarcane pathogen Leifsonia xyli subsp. xyli.</title>
        <authorList>
            <person name="Monteiro-Vitorello C.B."/>
            <person name="Camargo L.E.A."/>
            <person name="Van Sluys M.A."/>
            <person name="Kitajima J.P."/>
            <person name="Truffi D."/>
            <person name="do Amaral A.M."/>
            <person name="Harakava R."/>
            <person name="de Oliveira J.C.F."/>
            <person name="Wood D."/>
            <person name="de Oliveira M.C."/>
            <person name="Miyaki C.Y."/>
            <person name="Takita M.A."/>
            <person name="da Silva A.C.R."/>
            <person name="Furlan L.R."/>
            <person name="Carraro D.M."/>
            <person name="Camarotte G."/>
            <person name="Almeida N.F. Jr."/>
            <person name="Carrer H."/>
            <person name="Coutinho L.L."/>
            <person name="El-Dorry H.A."/>
            <person name="Ferro M.I.T."/>
            <person name="Gagliardi P.R."/>
            <person name="Giglioti E."/>
            <person name="Goldman M.H.S."/>
            <person name="Goldman G.H."/>
            <person name="Kimura E.T."/>
            <person name="Ferro E.S."/>
            <person name="Kuramae E.E."/>
            <person name="Lemos E.G.M."/>
            <person name="Lemos M.V.F."/>
            <person name="Mauro S.M.Z."/>
            <person name="Machado M.A."/>
            <person name="Marino C.L."/>
            <person name="Menck C.F."/>
            <person name="Nunes L.R."/>
            <person name="Oliveira R.C."/>
            <person name="Pereira G.G."/>
            <person name="Siqueira W."/>
            <person name="de Souza A.A."/>
            <person name="Tsai S.M."/>
            <person name="Zanca A.S."/>
            <person name="Simpson A.J.G."/>
            <person name="Brumbley S.M."/>
            <person name="Setubal J.C."/>
        </authorList>
    </citation>
    <scope>NUCLEOTIDE SEQUENCE [LARGE SCALE GENOMIC DNA]</scope>
    <source>
        <strain>CTCB07</strain>
    </source>
</reference>
<sequence length="178" mass="18836">MSRIGRLPIDVPAGVDVKIDGQAVTVKGPKGELSLTVASPIEVKLEEGQVLVTRPDDERESRSLHGLTRTLLNNNIVGVTQGYSKGLEIVGTGYRVAQKGAGVEFALGFSHPVTVEPPAGITFTVEGNNKLTVAGIDKQAVGEVAANIRKIRKPEPYKGKGVRYAGEVVRRKAGKAGK</sequence>